<organism>
    <name type="scientific">Brucella abortus (strain S19)</name>
    <dbReference type="NCBI Taxonomy" id="430066"/>
    <lineage>
        <taxon>Bacteria</taxon>
        <taxon>Pseudomonadati</taxon>
        <taxon>Pseudomonadota</taxon>
        <taxon>Alphaproteobacteria</taxon>
        <taxon>Hyphomicrobiales</taxon>
        <taxon>Brucellaceae</taxon>
        <taxon>Brucella/Ochrobactrum group</taxon>
        <taxon>Brucella</taxon>
    </lineage>
</organism>
<comment type="function">
    <text evidence="1">Transcriptional regulator.</text>
</comment>
<comment type="cofactor">
    <cofactor evidence="1">
        <name>Ni(2+)</name>
        <dbReference type="ChEBI" id="CHEBI:49786"/>
    </cofactor>
    <text evidence="1">Binds 1 nickel ion per subunit.</text>
</comment>
<comment type="similarity">
    <text evidence="1">Belongs to the transcriptional regulatory CopG/NikR family.</text>
</comment>
<name>NIKR_BRUA1</name>
<gene>
    <name type="ordered locus">BAbS19_II04070</name>
</gene>
<keyword id="KW-0238">DNA-binding</keyword>
<keyword id="KW-0479">Metal-binding</keyword>
<keyword id="KW-0533">Nickel</keyword>
<keyword id="KW-0804">Transcription</keyword>
<keyword id="KW-0805">Transcription regulation</keyword>
<feature type="chain" id="PRO_1000125808" description="Putative nickel-responsive regulator">
    <location>
        <begin position="1"/>
        <end position="132"/>
    </location>
</feature>
<feature type="binding site" evidence="1">
    <location>
        <position position="77"/>
    </location>
    <ligand>
        <name>Ni(2+)</name>
        <dbReference type="ChEBI" id="CHEBI:49786"/>
    </ligand>
</feature>
<feature type="binding site" evidence="1">
    <location>
        <position position="88"/>
    </location>
    <ligand>
        <name>Ni(2+)</name>
        <dbReference type="ChEBI" id="CHEBI:49786"/>
    </ligand>
</feature>
<feature type="binding site" evidence="1">
    <location>
        <position position="90"/>
    </location>
    <ligand>
        <name>Ni(2+)</name>
        <dbReference type="ChEBI" id="CHEBI:49786"/>
    </ligand>
</feature>
<feature type="binding site" evidence="1">
    <location>
        <position position="96"/>
    </location>
    <ligand>
        <name>Ni(2+)</name>
        <dbReference type="ChEBI" id="CHEBI:49786"/>
    </ligand>
</feature>
<protein>
    <recommendedName>
        <fullName evidence="1">Putative nickel-responsive regulator</fullName>
    </recommendedName>
</protein>
<proteinExistence type="inferred from homology"/>
<reference key="1">
    <citation type="journal article" date="2008" name="PLoS ONE">
        <title>Genome sequence of Brucella abortus vaccine strain S19 compared to virulent strains yields candidate virulence genes.</title>
        <authorList>
            <person name="Crasta O.R."/>
            <person name="Folkerts O."/>
            <person name="Fei Z."/>
            <person name="Mane S.P."/>
            <person name="Evans C."/>
            <person name="Martino-Catt S."/>
            <person name="Bricker B."/>
            <person name="Yu G."/>
            <person name="Du L."/>
            <person name="Sobral B.W."/>
        </authorList>
    </citation>
    <scope>NUCLEOTIDE SEQUENCE [LARGE SCALE GENOMIC DNA]</scope>
    <source>
        <strain>S19</strain>
    </source>
</reference>
<evidence type="ECO:0000255" key="1">
    <source>
        <dbReference type="HAMAP-Rule" id="MF_00476"/>
    </source>
</evidence>
<dbReference type="EMBL" id="CP000888">
    <property type="protein sequence ID" value="ACD73908.1"/>
    <property type="molecule type" value="Genomic_DNA"/>
</dbReference>
<dbReference type="SMR" id="B2SAM1"/>
<dbReference type="KEGG" id="bmc:BAbS19_II04070"/>
<dbReference type="HOGENOM" id="CLU_113319_1_4_5"/>
<dbReference type="Proteomes" id="UP000002565">
    <property type="component" value="Chromosome 2"/>
</dbReference>
<dbReference type="GO" id="GO:0003677">
    <property type="term" value="F:DNA binding"/>
    <property type="evidence" value="ECO:0007669"/>
    <property type="project" value="UniProtKB-KW"/>
</dbReference>
<dbReference type="GO" id="GO:0003700">
    <property type="term" value="F:DNA-binding transcription factor activity"/>
    <property type="evidence" value="ECO:0007669"/>
    <property type="project" value="UniProtKB-UniRule"/>
</dbReference>
<dbReference type="GO" id="GO:0016151">
    <property type="term" value="F:nickel cation binding"/>
    <property type="evidence" value="ECO:0007669"/>
    <property type="project" value="UniProtKB-UniRule"/>
</dbReference>
<dbReference type="GO" id="GO:0010045">
    <property type="term" value="P:response to nickel cation"/>
    <property type="evidence" value="ECO:0007669"/>
    <property type="project" value="InterPro"/>
</dbReference>
<dbReference type="CDD" id="cd22231">
    <property type="entry name" value="RHH_NikR_HicB-like"/>
    <property type="match status" value="1"/>
</dbReference>
<dbReference type="Gene3D" id="3.30.70.1150">
    <property type="entry name" value="ACT-like. Chain A, domain 2"/>
    <property type="match status" value="1"/>
</dbReference>
<dbReference type="Gene3D" id="1.10.1220.10">
    <property type="entry name" value="Met repressor-like"/>
    <property type="match status" value="1"/>
</dbReference>
<dbReference type="HAMAP" id="MF_00476">
    <property type="entry name" value="NikR"/>
    <property type="match status" value="1"/>
</dbReference>
<dbReference type="InterPro" id="IPR027271">
    <property type="entry name" value="Acetolactate_synth/TF_NikR_C"/>
</dbReference>
<dbReference type="InterPro" id="IPR045865">
    <property type="entry name" value="ACT-like_dom_sf"/>
</dbReference>
<dbReference type="InterPro" id="IPR013321">
    <property type="entry name" value="Arc_rbn_hlx_hlx"/>
</dbReference>
<dbReference type="InterPro" id="IPR002145">
    <property type="entry name" value="CopG"/>
</dbReference>
<dbReference type="InterPro" id="IPR050192">
    <property type="entry name" value="CopG/NikR_regulator"/>
</dbReference>
<dbReference type="InterPro" id="IPR022988">
    <property type="entry name" value="Ni_resp_reg_NikR"/>
</dbReference>
<dbReference type="InterPro" id="IPR014160">
    <property type="entry name" value="Nickel_NikR_proteobac"/>
</dbReference>
<dbReference type="InterPro" id="IPR010985">
    <property type="entry name" value="Ribbon_hlx_hlx"/>
</dbReference>
<dbReference type="InterPro" id="IPR014864">
    <property type="entry name" value="TF_NikR_Ni-bd_C"/>
</dbReference>
<dbReference type="NCBIfam" id="TIGR02793">
    <property type="entry name" value="nikR"/>
    <property type="match status" value="1"/>
</dbReference>
<dbReference type="NCBIfam" id="NF002815">
    <property type="entry name" value="PRK02967.1"/>
    <property type="match status" value="1"/>
</dbReference>
<dbReference type="NCBIfam" id="NF003381">
    <property type="entry name" value="PRK04460.1"/>
    <property type="match status" value="1"/>
</dbReference>
<dbReference type="PANTHER" id="PTHR34719">
    <property type="entry name" value="NICKEL-RESPONSIVE REGULATOR"/>
    <property type="match status" value="1"/>
</dbReference>
<dbReference type="PANTHER" id="PTHR34719:SF2">
    <property type="entry name" value="NICKEL-RESPONSIVE REGULATOR"/>
    <property type="match status" value="1"/>
</dbReference>
<dbReference type="Pfam" id="PF08753">
    <property type="entry name" value="NikR_C"/>
    <property type="match status" value="1"/>
</dbReference>
<dbReference type="Pfam" id="PF01402">
    <property type="entry name" value="RHH_1"/>
    <property type="match status" value="1"/>
</dbReference>
<dbReference type="SUPFAM" id="SSF55021">
    <property type="entry name" value="ACT-like"/>
    <property type="match status" value="1"/>
</dbReference>
<dbReference type="SUPFAM" id="SSF47598">
    <property type="entry name" value="Ribbon-helix-helix"/>
    <property type="match status" value="1"/>
</dbReference>
<accession>B2SAM1</accession>
<sequence length="132" mass="14930">MQRITITIDDDLMAALDRMIEIKGYQNRSEALRDLARTGLQQASLEEGQMEACVGVLSYTYDHSARDLSKKLTNTHHDHHNISVASMHVHLDHDRCLEVSILKGKTDDVRHFADHVKAERHVTHGTLAVLPL</sequence>